<organism>
    <name type="scientific">Tiliqua rugosa</name>
    <name type="common">Shingleback lizard</name>
    <name type="synonym">Trachydosaurus rugosus</name>
    <dbReference type="NCBI Taxonomy" id="8527"/>
    <lineage>
        <taxon>Eukaryota</taxon>
        <taxon>Metazoa</taxon>
        <taxon>Chordata</taxon>
        <taxon>Craniata</taxon>
        <taxon>Vertebrata</taxon>
        <taxon>Euteleostomi</taxon>
        <taxon>Lepidosauria</taxon>
        <taxon>Squamata</taxon>
        <taxon>Bifurcata</taxon>
        <taxon>Unidentata</taxon>
        <taxon>Scinciformata</taxon>
        <taxon>Scincidae</taxon>
        <taxon>Egerniinae</taxon>
        <taxon>Tiliqua</taxon>
    </lineage>
</organism>
<accession>P30623</accession>
<gene>
    <name type="primary">TTR</name>
</gene>
<sequence length="150" mass="16343">MGSSSLLLVCLAGMVYLTEAAPLVSHGSIDSKCPLMVKVLDAVRGRPATSIAVKVSKMSEEGDWKEFANGKTNEFGEIHELTTDEQFVQGLYKVEFDTSSYWKALGVSPFHEYADVVFSANDSGHRHYTIAALLSPFSYSTTAVVSDPKE</sequence>
<reference key="1">
    <citation type="journal article" date="1993" name="Am. J. Physiol.">
        <title>Transthyretin gene expression in choroid plexus first evolved in reptiles.</title>
        <authorList>
            <person name="Achen M.G."/>
            <person name="Duan W."/>
            <person name="Pettersson T.M."/>
            <person name="Harms P.J."/>
            <person name="Richardson S.J."/>
            <person name="Lawrence M.C."/>
            <person name="Wettenhall R.E.H."/>
            <person name="Aldred A.R."/>
            <person name="Schreiber G."/>
        </authorList>
    </citation>
    <scope>NUCLEOTIDE SEQUENCE [MRNA]</scope>
    <scope>TISSUE SPECIFICITY</scope>
    <scope>SUBCELLULAR LOCATION</scope>
    <scope>FUNCTION</scope>
    <scope>INTERACTION WITH RBP4</scope>
    <scope>3D-STRUCTURE MODELING</scope>
    <source>
        <tissue>Brain</tissue>
    </source>
</reference>
<keyword id="KW-0372">Hormone</keyword>
<keyword id="KW-0964">Secreted</keyword>
<keyword id="KW-0732">Signal</keyword>
<keyword id="KW-0765">Sulfation</keyword>
<keyword id="KW-0795">Thyroid hormone</keyword>
<keyword id="KW-0813">Transport</keyword>
<feature type="signal peptide" evidence="1">
    <location>
        <begin position="1"/>
        <end position="20"/>
    </location>
</feature>
<feature type="chain" id="PRO_0000035770" description="Transthyretin">
    <location>
        <begin position="21"/>
        <end position="150"/>
    </location>
</feature>
<feature type="binding site" evidence="2">
    <location>
        <position position="38"/>
    </location>
    <ligand>
        <name>L-thyroxine</name>
        <dbReference type="ChEBI" id="CHEBI:58448"/>
    </ligand>
</feature>
<feature type="binding site" evidence="2">
    <location>
        <position position="77"/>
    </location>
    <ligand>
        <name>L-thyroxine</name>
        <dbReference type="ChEBI" id="CHEBI:58448"/>
    </ligand>
</feature>
<feature type="binding site" evidence="2">
    <location>
        <position position="140"/>
    </location>
    <ligand>
        <name>L-thyroxine</name>
        <dbReference type="ChEBI" id="CHEBI:58448"/>
    </ligand>
</feature>
<feature type="modified residue" description="Sulfocysteine" evidence="2">
    <location>
        <position position="33"/>
    </location>
</feature>
<name>TTHY_TILRU</name>
<dbReference type="EMBL" id="X66697">
    <property type="protein sequence ID" value="CAA47238.1"/>
    <property type="molecule type" value="mRNA"/>
</dbReference>
<dbReference type="EMBL" id="M97509">
    <property type="protein sequence ID" value="AAA49620.1"/>
    <property type="molecule type" value="mRNA"/>
</dbReference>
<dbReference type="PIR" id="I51367">
    <property type="entry name" value="I51367"/>
</dbReference>
<dbReference type="PIR" id="I51375">
    <property type="entry name" value="S25531"/>
</dbReference>
<dbReference type="SMR" id="P30623"/>
<dbReference type="GO" id="GO:0005615">
    <property type="term" value="C:extracellular space"/>
    <property type="evidence" value="ECO:0007669"/>
    <property type="project" value="TreeGrafter"/>
</dbReference>
<dbReference type="GO" id="GO:0005179">
    <property type="term" value="F:hormone activity"/>
    <property type="evidence" value="ECO:0007669"/>
    <property type="project" value="UniProtKB-KW"/>
</dbReference>
<dbReference type="GO" id="GO:0070324">
    <property type="term" value="F:thyroid hormone binding"/>
    <property type="evidence" value="ECO:0007669"/>
    <property type="project" value="TreeGrafter"/>
</dbReference>
<dbReference type="GO" id="GO:0006144">
    <property type="term" value="P:purine nucleobase metabolic process"/>
    <property type="evidence" value="ECO:0007669"/>
    <property type="project" value="TreeGrafter"/>
</dbReference>
<dbReference type="CDD" id="cd05821">
    <property type="entry name" value="TLP_Transthyretin"/>
    <property type="match status" value="1"/>
</dbReference>
<dbReference type="FunFam" id="2.60.40.180:FF:000002">
    <property type="entry name" value="Transthyretin"/>
    <property type="match status" value="1"/>
</dbReference>
<dbReference type="Gene3D" id="2.60.40.180">
    <property type="entry name" value="Transthyretin/hydroxyisourate hydrolase domain"/>
    <property type="match status" value="1"/>
</dbReference>
<dbReference type="InterPro" id="IPR023418">
    <property type="entry name" value="Thyroxine_BS"/>
</dbReference>
<dbReference type="InterPro" id="IPR000895">
    <property type="entry name" value="Transthyretin/HIU_hydrolase"/>
</dbReference>
<dbReference type="InterPro" id="IPR023416">
    <property type="entry name" value="Transthyretin/HIU_hydrolase_d"/>
</dbReference>
<dbReference type="InterPro" id="IPR036817">
    <property type="entry name" value="Transthyretin/HIU_hydrolase_sf"/>
</dbReference>
<dbReference type="InterPro" id="IPR023419">
    <property type="entry name" value="Transthyretin_CS"/>
</dbReference>
<dbReference type="PANTHER" id="PTHR10395:SF12">
    <property type="entry name" value="TRANSTHYRETIN"/>
    <property type="match status" value="1"/>
</dbReference>
<dbReference type="PANTHER" id="PTHR10395">
    <property type="entry name" value="URICASE AND TRANSTHYRETIN-RELATED"/>
    <property type="match status" value="1"/>
</dbReference>
<dbReference type="Pfam" id="PF00576">
    <property type="entry name" value="Transthyretin"/>
    <property type="match status" value="1"/>
</dbReference>
<dbReference type="PRINTS" id="PR00189">
    <property type="entry name" value="TRNSTHYRETIN"/>
</dbReference>
<dbReference type="SMART" id="SM00095">
    <property type="entry name" value="TR_THY"/>
    <property type="match status" value="1"/>
</dbReference>
<dbReference type="SUPFAM" id="SSF49472">
    <property type="entry name" value="Transthyretin (synonym: prealbumin)"/>
    <property type="match status" value="1"/>
</dbReference>
<dbReference type="PROSITE" id="PS00768">
    <property type="entry name" value="TRANSTHYRETIN_1"/>
    <property type="match status" value="1"/>
</dbReference>
<dbReference type="PROSITE" id="PS00769">
    <property type="entry name" value="TRANSTHYRETIN_2"/>
    <property type="match status" value="1"/>
</dbReference>
<evidence type="ECO:0000250" key="1"/>
<evidence type="ECO:0000250" key="2">
    <source>
        <dbReference type="UniProtKB" id="P02766"/>
    </source>
</evidence>
<evidence type="ECO:0000269" key="3">
    <source>
    </source>
</evidence>
<evidence type="ECO:0000305" key="4"/>
<comment type="function">
    <text evidence="3">Thyroid hormone-binding protein. Probably transports thyroxine from the bloodstream to the brain.</text>
</comment>
<comment type="subunit">
    <text evidence="1 3">Homotetramer. Dimer of dimers. In the homotetramer, subunits assemble around a central channel that can accommodate two ligand molecules (By similarity). Interacts with RBP4.</text>
</comment>
<comment type="subcellular location">
    <subcellularLocation>
        <location evidence="3">Secreted</location>
    </subcellularLocation>
</comment>
<comment type="tissue specificity">
    <text evidence="3">Detected in choroid plexus (at protein level). Detected in choroid plexus.</text>
</comment>
<comment type="domain">
    <text evidence="1">The N-terminus strongly influences thyroid hormone-binding properties.</text>
</comment>
<comment type="PTM">
    <text evidence="2">Sulfonation of the reactive cysteine Cys-33 enhances the stability of the native conformation of TTR, avoiding misassembly of the protein leading to amyloid formation.</text>
</comment>
<comment type="similarity">
    <text evidence="4">Belongs to the transthyretin family.</text>
</comment>
<protein>
    <recommendedName>
        <fullName>Transthyretin</fullName>
    </recommendedName>
    <alternativeName>
        <fullName>Prealbumin</fullName>
    </alternativeName>
    <alternativeName>
        <fullName>TBPA</fullName>
    </alternativeName>
</protein>
<proteinExistence type="evidence at protein level"/>